<feature type="chain" id="PRO_0000116078" description="Tegument protein UL47 homolog">
    <location>
        <begin position="1"/>
        <end position="871"/>
    </location>
</feature>
<feature type="region of interest" description="Disordered" evidence="4">
    <location>
        <begin position="1"/>
        <end position="212"/>
    </location>
</feature>
<feature type="short sequence motif" description="Nuclear localization signal" evidence="3">
    <location>
        <begin position="13"/>
        <end position="33"/>
    </location>
</feature>
<feature type="compositionally biased region" description="Polar residues" evidence="4">
    <location>
        <begin position="30"/>
        <end position="41"/>
    </location>
</feature>
<feature type="compositionally biased region" description="Polar residues" evidence="4">
    <location>
        <begin position="59"/>
        <end position="81"/>
    </location>
</feature>
<feature type="compositionally biased region" description="Acidic residues" evidence="4">
    <location>
        <begin position="114"/>
        <end position="134"/>
    </location>
</feature>
<feature type="compositionally biased region" description="Acidic residues" evidence="4">
    <location>
        <begin position="146"/>
        <end position="155"/>
    </location>
</feature>
<feature type="compositionally biased region" description="Acidic residues" evidence="4">
    <location>
        <begin position="185"/>
        <end position="207"/>
    </location>
</feature>
<protein>
    <recommendedName>
        <fullName>Tegument protein UL47 homolog</fullName>
    </recommendedName>
    <alternativeName>
        <fullName>GP10</fullName>
    </alternativeName>
</protein>
<dbReference type="EMBL" id="AY464052">
    <property type="protein sequence ID" value="AAS45897.1"/>
    <property type="molecule type" value="Genomic_DNA"/>
</dbReference>
<dbReference type="Proteomes" id="UP000008296">
    <property type="component" value="Segment"/>
</dbReference>
<dbReference type="GO" id="GO:0030430">
    <property type="term" value="C:host cell cytoplasm"/>
    <property type="evidence" value="ECO:0007669"/>
    <property type="project" value="UniProtKB-SubCell"/>
</dbReference>
<dbReference type="GO" id="GO:0042025">
    <property type="term" value="C:host cell nucleus"/>
    <property type="evidence" value="ECO:0007669"/>
    <property type="project" value="UniProtKB-SubCell"/>
</dbReference>
<dbReference type="GO" id="GO:0019033">
    <property type="term" value="C:viral tegument"/>
    <property type="evidence" value="ECO:0007669"/>
    <property type="project" value="UniProtKB-SubCell"/>
</dbReference>
<dbReference type="GO" id="GO:0006355">
    <property type="term" value="P:regulation of DNA-templated transcription"/>
    <property type="evidence" value="ECO:0007669"/>
    <property type="project" value="InterPro"/>
</dbReference>
<dbReference type="InterPro" id="IPR005029">
    <property type="entry name" value="Herpes_UL47"/>
</dbReference>
<dbReference type="Pfam" id="PF03362">
    <property type="entry name" value="Herpes_UL47"/>
    <property type="match status" value="1"/>
</dbReference>
<accession>Q6S6Q8</accession>
<organism>
    <name type="scientific">Equine herpesvirus 1 (strain V592)</name>
    <name type="common">EHV-1</name>
    <name type="synonym">Equine abortion virus</name>
    <dbReference type="NCBI Taxonomy" id="310273"/>
    <lineage>
        <taxon>Viruses</taxon>
        <taxon>Duplodnaviria</taxon>
        <taxon>Heunggongvirae</taxon>
        <taxon>Peploviricota</taxon>
        <taxon>Herviviricetes</taxon>
        <taxon>Herpesvirales</taxon>
        <taxon>Orthoherpesviridae</taxon>
        <taxon>Alphaherpesvirinae</taxon>
        <taxon>Varicellovirus</taxon>
        <taxon>Varicellovirus equidalpha1</taxon>
        <taxon>Equid alphaherpesvirus 1</taxon>
    </lineage>
</organism>
<organismHost>
    <name type="scientific">Equus caballus</name>
    <name type="common">Horse</name>
    <dbReference type="NCBI Taxonomy" id="9796"/>
</organismHost>
<sequence>MDQHHGARGGAPIRRPRRSIESRSHPFRATGNTQRTYSTPRLSYRDGLSGRTASRDPQEQASNQDESSNPSTSNAQQSTSFWGYLRRVFSDDVPAQPQAPRPRADFAPPAGEESSSEEEEEEGPAQAPLDEEDQLMYADQYSVGDSSDENDEEEDPRLGSDYPTSAESSEYHDHGEMVAGAGAESESETDIDAEEEEEDDEDDEDDMEVIRDESYRLPRTWLDKSIRLMDEALAQSSELSKAITKSTRSLYDSQFAPGGRGYTQTATPSRRLVQLSRAGMYDSDKIVMTGDYMEVDDDPDSAYQLWVRAIRHPLAMNPSWEETISNHTNPSFSTDIDYDIDELIEKNLARTPPVFEGLLDSAEFFYKLPMLYTYATITQDEAYEERLAWSNTQALHGHEQSSWQALLVYYSRGGMYVSPTQEPRGIWRRALKQAMALQLKMCVLGLSDVVTKQNATHHHTAVTFLVDALLRTARNCYLASRLLVFAWERRRETGAKRPAEPLIALSGVTLLQPLPPEVSELLEQRTFDIGLRTPNSAVFRAFFGSLVYWAELRLALRDPASINCRYVGFHLQTSEIYLLARAHSASPGYTKEELVAMEAILTLATLMLEVALQWVHVACAQLLSENDTIKAFRRVSASIPHALAPLGSIRLHDAEFEVLSNPDVMVARDETALSQALFLGYFSVRTALTACMRDYSHEADGGSKETVTGVFLGVGLILQRLAGHLNFLLNCLAGAALYGGQKINIHSLTLPRYSLLADVMAPMLQRQSLVDFWRARDNMLEDLEITPRPGPPTQGKRVVVEMPLPSDDLPDMTPGASVNNGAGLGRMVDMAKQLQHYRETIIGEEATSSVGKRGLIRAGVGVAALRGRRRK</sequence>
<name>TEG5_EHV1V</name>
<gene>
    <name type="ordered locus">13</name>
</gene>
<comment type="function">
    <text evidence="2">Tegument protein that can bind to various RNA transcripts. Plays a role in the attenuation of selective viral and cellular mRNA degradation by modulating the activity of host shutoff RNase UL41/VHS. Also plays a role in the primary envelopment of virions in the perinuclear space, probably by interacting with two nuclear egress proteins UL31 and UL34.</text>
</comment>
<comment type="subunit">
    <text evidence="2">Interacts with US3 kinase. Interacts with UL31 and UL34; these interactions seem important for efficient virion nuclear egress. Interacts with UL41/VHS.</text>
</comment>
<comment type="subcellular location">
    <subcellularLocation>
        <location evidence="2">Virion tegument</location>
    </subcellularLocation>
    <subcellularLocation>
        <location evidence="2">Host nucleus</location>
    </subcellularLocation>
    <subcellularLocation>
        <location evidence="2">Host cytoplasm</location>
    </subcellularLocation>
    <text evidence="2">Major tegument protein of the virion. Undergoes nucleocytoplasmic shuttling during infection. Localizes to the major sites of transcription in the infected cell nucleus.</text>
</comment>
<comment type="domain">
    <text evidence="2">The nuclear export signal is CRM1-dependent.</text>
</comment>
<comment type="PTM">
    <text evidence="2">Phosphorylated by US3. This phosphorylation is required for proper nuclear localization.</text>
</comment>
<comment type="miscellaneous">
    <text evidence="1">Expressed in late in the infection.</text>
</comment>
<comment type="similarity">
    <text evidence="5">Belongs to the alphaherpesvirinae HHV-1 UL47 family.</text>
</comment>
<keyword id="KW-1035">Host cytoplasm</keyword>
<keyword id="KW-1048">Host nucleus</keyword>
<keyword id="KW-0426">Late protein</keyword>
<keyword id="KW-0804">Transcription</keyword>
<keyword id="KW-0805">Transcription regulation</keyword>
<keyword id="KW-0946">Virion</keyword>
<keyword id="KW-0920">Virion tegument</keyword>
<reference evidence="5 6" key="1">
    <citation type="submission" date="2003-11" db="EMBL/GenBank/DDBJ databases">
        <authorList>
            <person name="Davis-Poynter N."/>
            <person name="Nugent J."/>
            <person name="Birch-Machin I."/>
            <person name="Allen G.P."/>
        </authorList>
    </citation>
    <scope>NUCLEOTIDE SEQUENCE [LARGE SCALE GENOMIC DNA]</scope>
</reference>
<proteinExistence type="inferred from homology"/>
<evidence type="ECO:0000250" key="1"/>
<evidence type="ECO:0000250" key="2">
    <source>
        <dbReference type="UniProtKB" id="P10231"/>
    </source>
</evidence>
<evidence type="ECO:0000255" key="3"/>
<evidence type="ECO:0000256" key="4">
    <source>
        <dbReference type="SAM" id="MobiDB-lite"/>
    </source>
</evidence>
<evidence type="ECO:0000305" key="5"/>
<evidence type="ECO:0000312" key="6">
    <source>
        <dbReference type="EMBL" id="AAS45897.1"/>
    </source>
</evidence>